<proteinExistence type="inferred from homology"/>
<keyword id="KW-0963">Cytoplasm</keyword>
<keyword id="KW-0312">Gluconeogenesis</keyword>
<keyword id="KW-0324">Glycolysis</keyword>
<keyword id="KW-0413">Isomerase</keyword>
<keyword id="KW-1185">Reference proteome</keyword>
<gene>
    <name evidence="1" type="primary">pgi2</name>
    <name type="ordered locus">NGO_1668</name>
</gene>
<feature type="chain" id="PRO_0000180690" description="Glucose-6-phosphate isomerase 2">
    <location>
        <begin position="1"/>
        <end position="547"/>
    </location>
</feature>
<feature type="active site" description="Proton donor" evidence="1">
    <location>
        <position position="351"/>
    </location>
</feature>
<feature type="active site" evidence="1">
    <location>
        <position position="382"/>
    </location>
</feature>
<feature type="active site" evidence="1">
    <location>
        <position position="508"/>
    </location>
</feature>
<evidence type="ECO:0000255" key="1">
    <source>
        <dbReference type="HAMAP-Rule" id="MF_00473"/>
    </source>
</evidence>
<comment type="function">
    <text evidence="1">Catalyzes the reversible isomerization of glucose-6-phosphate to fructose-6-phosphate.</text>
</comment>
<comment type="catalytic activity">
    <reaction evidence="1">
        <text>alpha-D-glucose 6-phosphate = beta-D-fructose 6-phosphate</text>
        <dbReference type="Rhea" id="RHEA:11816"/>
        <dbReference type="ChEBI" id="CHEBI:57634"/>
        <dbReference type="ChEBI" id="CHEBI:58225"/>
        <dbReference type="EC" id="5.3.1.9"/>
    </reaction>
</comment>
<comment type="pathway">
    <text evidence="1">Carbohydrate biosynthesis; gluconeogenesis.</text>
</comment>
<comment type="pathway">
    <text evidence="1">Carbohydrate degradation; glycolysis; D-glyceraldehyde 3-phosphate and glycerone phosphate from D-glucose: step 2/4.</text>
</comment>
<comment type="subcellular location">
    <subcellularLocation>
        <location evidence="1">Cytoplasm</location>
    </subcellularLocation>
</comment>
<comment type="similarity">
    <text evidence="1">Belongs to the GPI family.</text>
</comment>
<organism>
    <name type="scientific">Neisseria gonorrhoeae (strain ATCC 700825 / FA 1090)</name>
    <dbReference type="NCBI Taxonomy" id="242231"/>
    <lineage>
        <taxon>Bacteria</taxon>
        <taxon>Pseudomonadati</taxon>
        <taxon>Pseudomonadota</taxon>
        <taxon>Betaproteobacteria</taxon>
        <taxon>Neisseriales</taxon>
        <taxon>Neisseriaceae</taxon>
        <taxon>Neisseria</taxon>
    </lineage>
</organism>
<protein>
    <recommendedName>
        <fullName evidence="1">Glucose-6-phosphate isomerase 2</fullName>
        <shortName evidence="1">GPI 2</shortName>
        <ecNumber evidence="1">5.3.1.9</ecNumber>
    </recommendedName>
    <alternativeName>
        <fullName evidence="1">Phosphoglucose isomerase 2</fullName>
        <shortName evidence="1">PGI 2</shortName>
    </alternativeName>
    <alternativeName>
        <fullName evidence="1">Phosphohexose isomerase 2</fullName>
        <shortName evidence="1">PHI 2</shortName>
    </alternativeName>
</protein>
<reference key="1">
    <citation type="submission" date="2003-03" db="EMBL/GenBank/DDBJ databases">
        <title>The complete genome sequence of Neisseria gonorrhoeae.</title>
        <authorList>
            <person name="Lewis L.A."/>
            <person name="Gillaspy A.F."/>
            <person name="McLaughlin R.E."/>
            <person name="Gipson M."/>
            <person name="Ducey T.F."/>
            <person name="Ownbey T."/>
            <person name="Hartman K."/>
            <person name="Nydick C."/>
            <person name="Carson M.B."/>
            <person name="Vaughn J."/>
            <person name="Thomson C."/>
            <person name="Song L."/>
            <person name="Lin S."/>
            <person name="Yuan X."/>
            <person name="Najar F."/>
            <person name="Zhan M."/>
            <person name="Ren Q."/>
            <person name="Zhu H."/>
            <person name="Qi S."/>
            <person name="Kenton S.M."/>
            <person name="Lai H."/>
            <person name="White J.D."/>
            <person name="Clifton S."/>
            <person name="Roe B.A."/>
            <person name="Dyer D.W."/>
        </authorList>
    </citation>
    <scope>NUCLEOTIDE SEQUENCE [LARGE SCALE GENOMIC DNA]</scope>
    <source>
        <strain>ATCC 700825 / FA 1090</strain>
    </source>
</reference>
<accession>Q5F694</accession>
<name>G6PI2_NEIG1</name>
<sequence length="547" mass="60317">MDAFTRAWYALERHYQDTCHILLRDRFAAEPDRFERMHERLDGMLFDYSKNRFGEDTLQLLCRLAETADLEGKMRALRTGAKVNGSEGRAALHTALRLPDGADAVYADGRDVLPEIRRELNRALKFAHSLDDGLYQGITGKRIADFVHIGIGGSDLGPAMCVQALEPFRRQISVHFVSNADPACLDEVLCRLNPETTMFCVASKSFKTPETLLNAEAVKAWYRGAGFSESETAHHFCAVSADTEAAQSFGIAAERVFAMYDWVGGRYSVWSPVGLPVMVAVGGARFRELLAGAHAMDSHFFHTPPRRNIPVLMALIAVWYNNFQHADGQTAVPYSHNLRLLPAWLNQLDMESLGKSRASDGSPAACKTGGIVFGGEGVNCQHAYFQLLHQGTRLIPCDFIVPMTAQGAEDGRSRFTVANAFAQAEALMKGKTLDEARAELADLPEAERERLAPHKEFPGNRPSNSILLDRLTPCNLGMLMAAYEHKTFVQGAIWNVNPFDQWGVEYGKQLAKTIIGELEGGTSVHDASTEGLMAFYRECRLKGGGAA</sequence>
<dbReference type="EC" id="5.3.1.9" evidence="1"/>
<dbReference type="EMBL" id="AE004969">
    <property type="protein sequence ID" value="AAW90293.1"/>
    <property type="molecule type" value="Genomic_DNA"/>
</dbReference>
<dbReference type="RefSeq" id="WP_010951319.1">
    <property type="nucleotide sequence ID" value="NC_002946.2"/>
</dbReference>
<dbReference type="RefSeq" id="YP_208705.1">
    <property type="nucleotide sequence ID" value="NC_002946.2"/>
</dbReference>
<dbReference type="SMR" id="Q5F694"/>
<dbReference type="STRING" id="242231.NGO_1668"/>
<dbReference type="KEGG" id="ngo:NGO_1668"/>
<dbReference type="PATRIC" id="fig|242231.10.peg.1988"/>
<dbReference type="HOGENOM" id="CLU_017947_3_1_4"/>
<dbReference type="UniPathway" id="UPA00109">
    <property type="reaction ID" value="UER00181"/>
</dbReference>
<dbReference type="UniPathway" id="UPA00138"/>
<dbReference type="Proteomes" id="UP000000535">
    <property type="component" value="Chromosome"/>
</dbReference>
<dbReference type="GO" id="GO:0005829">
    <property type="term" value="C:cytosol"/>
    <property type="evidence" value="ECO:0007669"/>
    <property type="project" value="TreeGrafter"/>
</dbReference>
<dbReference type="GO" id="GO:0097367">
    <property type="term" value="F:carbohydrate derivative binding"/>
    <property type="evidence" value="ECO:0007669"/>
    <property type="project" value="InterPro"/>
</dbReference>
<dbReference type="GO" id="GO:0004347">
    <property type="term" value="F:glucose-6-phosphate isomerase activity"/>
    <property type="evidence" value="ECO:0007669"/>
    <property type="project" value="UniProtKB-UniRule"/>
</dbReference>
<dbReference type="GO" id="GO:0048029">
    <property type="term" value="F:monosaccharide binding"/>
    <property type="evidence" value="ECO:0007669"/>
    <property type="project" value="TreeGrafter"/>
</dbReference>
<dbReference type="GO" id="GO:0006094">
    <property type="term" value="P:gluconeogenesis"/>
    <property type="evidence" value="ECO:0007669"/>
    <property type="project" value="UniProtKB-UniRule"/>
</dbReference>
<dbReference type="GO" id="GO:0051156">
    <property type="term" value="P:glucose 6-phosphate metabolic process"/>
    <property type="evidence" value="ECO:0007669"/>
    <property type="project" value="TreeGrafter"/>
</dbReference>
<dbReference type="GO" id="GO:0006096">
    <property type="term" value="P:glycolytic process"/>
    <property type="evidence" value="ECO:0007669"/>
    <property type="project" value="UniProtKB-UniRule"/>
</dbReference>
<dbReference type="CDD" id="cd05015">
    <property type="entry name" value="SIS_PGI_1"/>
    <property type="match status" value="1"/>
</dbReference>
<dbReference type="CDD" id="cd05016">
    <property type="entry name" value="SIS_PGI_2"/>
    <property type="match status" value="1"/>
</dbReference>
<dbReference type="FunFam" id="1.10.1390.10:FF:000001">
    <property type="entry name" value="Glucose-6-phosphate isomerase"/>
    <property type="match status" value="1"/>
</dbReference>
<dbReference type="Gene3D" id="1.10.1390.10">
    <property type="match status" value="1"/>
</dbReference>
<dbReference type="Gene3D" id="3.40.50.10490">
    <property type="entry name" value="Glucose-6-phosphate isomerase like protein, domain 1"/>
    <property type="match status" value="2"/>
</dbReference>
<dbReference type="HAMAP" id="MF_00473">
    <property type="entry name" value="G6P_isomerase"/>
    <property type="match status" value="1"/>
</dbReference>
<dbReference type="InterPro" id="IPR001672">
    <property type="entry name" value="G6P_Isomerase"/>
</dbReference>
<dbReference type="InterPro" id="IPR023096">
    <property type="entry name" value="G6P_Isomerase_C"/>
</dbReference>
<dbReference type="InterPro" id="IPR018189">
    <property type="entry name" value="Phosphoglucose_isomerase_CS"/>
</dbReference>
<dbReference type="InterPro" id="IPR046348">
    <property type="entry name" value="SIS_dom_sf"/>
</dbReference>
<dbReference type="InterPro" id="IPR035476">
    <property type="entry name" value="SIS_PGI_1"/>
</dbReference>
<dbReference type="InterPro" id="IPR035482">
    <property type="entry name" value="SIS_PGI_2"/>
</dbReference>
<dbReference type="NCBIfam" id="NF001211">
    <property type="entry name" value="PRK00179.1"/>
    <property type="match status" value="1"/>
</dbReference>
<dbReference type="PANTHER" id="PTHR11469">
    <property type="entry name" value="GLUCOSE-6-PHOSPHATE ISOMERASE"/>
    <property type="match status" value="1"/>
</dbReference>
<dbReference type="PANTHER" id="PTHR11469:SF1">
    <property type="entry name" value="GLUCOSE-6-PHOSPHATE ISOMERASE"/>
    <property type="match status" value="1"/>
</dbReference>
<dbReference type="Pfam" id="PF00342">
    <property type="entry name" value="PGI"/>
    <property type="match status" value="1"/>
</dbReference>
<dbReference type="PRINTS" id="PR00662">
    <property type="entry name" value="G6PISOMERASE"/>
</dbReference>
<dbReference type="SUPFAM" id="SSF53697">
    <property type="entry name" value="SIS domain"/>
    <property type="match status" value="1"/>
</dbReference>
<dbReference type="PROSITE" id="PS00765">
    <property type="entry name" value="P_GLUCOSE_ISOMERASE_1"/>
    <property type="match status" value="1"/>
</dbReference>
<dbReference type="PROSITE" id="PS00174">
    <property type="entry name" value="P_GLUCOSE_ISOMERASE_2"/>
    <property type="match status" value="1"/>
</dbReference>
<dbReference type="PROSITE" id="PS51463">
    <property type="entry name" value="P_GLUCOSE_ISOMERASE_3"/>
    <property type="match status" value="1"/>
</dbReference>